<accession>Q54T43</accession>
<name>Y5088_DICDI</name>
<proteinExistence type="predicted"/>
<sequence length="56" mass="6751">MNDQKNISINEAIKQFPQEFNNRIGFELNRINTNLRFSHFEEQRGNMFFLMSNLNV</sequence>
<keyword id="KW-1185">Reference proteome</keyword>
<gene>
    <name type="ORF">DDB_G0282015</name>
</gene>
<protein>
    <recommendedName>
        <fullName>Putative uncharacterized protein DDB_G0282015</fullName>
    </recommendedName>
</protein>
<organism>
    <name type="scientific">Dictyostelium discoideum</name>
    <name type="common">Social amoeba</name>
    <dbReference type="NCBI Taxonomy" id="44689"/>
    <lineage>
        <taxon>Eukaryota</taxon>
        <taxon>Amoebozoa</taxon>
        <taxon>Evosea</taxon>
        <taxon>Eumycetozoa</taxon>
        <taxon>Dictyostelia</taxon>
        <taxon>Dictyosteliales</taxon>
        <taxon>Dictyosteliaceae</taxon>
        <taxon>Dictyostelium</taxon>
    </lineage>
</organism>
<feature type="chain" id="PRO_0000351238" description="Putative uncharacterized protein DDB_G0282015">
    <location>
        <begin position="1"/>
        <end position="56"/>
    </location>
</feature>
<reference key="1">
    <citation type="journal article" date="2005" name="Nature">
        <title>The genome of the social amoeba Dictyostelium discoideum.</title>
        <authorList>
            <person name="Eichinger L."/>
            <person name="Pachebat J.A."/>
            <person name="Gloeckner G."/>
            <person name="Rajandream M.A."/>
            <person name="Sucgang R."/>
            <person name="Berriman M."/>
            <person name="Song J."/>
            <person name="Olsen R."/>
            <person name="Szafranski K."/>
            <person name="Xu Q."/>
            <person name="Tunggal B."/>
            <person name="Kummerfeld S."/>
            <person name="Madera M."/>
            <person name="Konfortov B.A."/>
            <person name="Rivero F."/>
            <person name="Bankier A.T."/>
            <person name="Lehmann R."/>
            <person name="Hamlin N."/>
            <person name="Davies R."/>
            <person name="Gaudet P."/>
            <person name="Fey P."/>
            <person name="Pilcher K."/>
            <person name="Chen G."/>
            <person name="Saunders D."/>
            <person name="Sodergren E.J."/>
            <person name="Davis P."/>
            <person name="Kerhornou A."/>
            <person name="Nie X."/>
            <person name="Hall N."/>
            <person name="Anjard C."/>
            <person name="Hemphill L."/>
            <person name="Bason N."/>
            <person name="Farbrother P."/>
            <person name="Desany B."/>
            <person name="Just E."/>
            <person name="Morio T."/>
            <person name="Rost R."/>
            <person name="Churcher C.M."/>
            <person name="Cooper J."/>
            <person name="Haydock S."/>
            <person name="van Driessche N."/>
            <person name="Cronin A."/>
            <person name="Goodhead I."/>
            <person name="Muzny D.M."/>
            <person name="Mourier T."/>
            <person name="Pain A."/>
            <person name="Lu M."/>
            <person name="Harper D."/>
            <person name="Lindsay R."/>
            <person name="Hauser H."/>
            <person name="James K.D."/>
            <person name="Quiles M."/>
            <person name="Madan Babu M."/>
            <person name="Saito T."/>
            <person name="Buchrieser C."/>
            <person name="Wardroper A."/>
            <person name="Felder M."/>
            <person name="Thangavelu M."/>
            <person name="Johnson D."/>
            <person name="Knights A."/>
            <person name="Loulseged H."/>
            <person name="Mungall K.L."/>
            <person name="Oliver K."/>
            <person name="Price C."/>
            <person name="Quail M.A."/>
            <person name="Urushihara H."/>
            <person name="Hernandez J."/>
            <person name="Rabbinowitsch E."/>
            <person name="Steffen D."/>
            <person name="Sanders M."/>
            <person name="Ma J."/>
            <person name="Kohara Y."/>
            <person name="Sharp S."/>
            <person name="Simmonds M.N."/>
            <person name="Spiegler S."/>
            <person name="Tivey A."/>
            <person name="Sugano S."/>
            <person name="White B."/>
            <person name="Walker D."/>
            <person name="Woodward J.R."/>
            <person name="Winckler T."/>
            <person name="Tanaka Y."/>
            <person name="Shaulsky G."/>
            <person name="Schleicher M."/>
            <person name="Weinstock G.M."/>
            <person name="Rosenthal A."/>
            <person name="Cox E.C."/>
            <person name="Chisholm R.L."/>
            <person name="Gibbs R.A."/>
            <person name="Loomis W.F."/>
            <person name="Platzer M."/>
            <person name="Kay R.R."/>
            <person name="Williams J.G."/>
            <person name="Dear P.H."/>
            <person name="Noegel A.A."/>
            <person name="Barrell B.G."/>
            <person name="Kuspa A."/>
        </authorList>
    </citation>
    <scope>NUCLEOTIDE SEQUENCE [LARGE SCALE GENOMIC DNA]</scope>
    <source>
        <strain>AX4</strain>
    </source>
</reference>
<dbReference type="EMBL" id="AAFI02000044">
    <property type="protein sequence ID" value="EAL66429.1"/>
    <property type="molecule type" value="Genomic_DNA"/>
</dbReference>
<dbReference type="RefSeq" id="XP_640408.1">
    <property type="nucleotide sequence ID" value="XM_635316.1"/>
</dbReference>
<dbReference type="PaxDb" id="44689-DDB0205088"/>
<dbReference type="EnsemblProtists" id="EAL66429">
    <property type="protein sequence ID" value="EAL66429"/>
    <property type="gene ID" value="DDB_G0282015"/>
</dbReference>
<dbReference type="GeneID" id="8623363"/>
<dbReference type="KEGG" id="ddi:DDB_G0282015"/>
<dbReference type="dictyBase" id="DDB_G0282015"/>
<dbReference type="VEuPathDB" id="AmoebaDB:DDB_G0282015"/>
<dbReference type="HOGENOM" id="CLU_3018286_0_0_1"/>
<dbReference type="InParanoid" id="Q54T43"/>
<dbReference type="PRO" id="PR:Q54T43"/>
<dbReference type="Proteomes" id="UP000002195">
    <property type="component" value="Chromosome 3"/>
</dbReference>